<gene>
    <name evidence="1" type="primary">trmD</name>
    <name type="ordered locus">DIP1530</name>
</gene>
<accession>Q6NGI5</accession>
<feature type="chain" id="PRO_0000060363" description="tRNA (guanine-N(1)-)-methyltransferase">
    <location>
        <begin position="1"/>
        <end position="292"/>
    </location>
</feature>
<feature type="binding site" evidence="1">
    <location>
        <position position="151"/>
    </location>
    <ligand>
        <name>S-adenosyl-L-methionine</name>
        <dbReference type="ChEBI" id="CHEBI:59789"/>
    </ligand>
</feature>
<feature type="binding site" evidence="1">
    <location>
        <begin position="175"/>
        <end position="180"/>
    </location>
    <ligand>
        <name>S-adenosyl-L-methionine</name>
        <dbReference type="ChEBI" id="CHEBI:59789"/>
    </ligand>
</feature>
<feature type="strand" evidence="2">
    <location>
        <begin position="1"/>
        <end position="8"/>
    </location>
</feature>
<feature type="helix" evidence="2">
    <location>
        <begin position="10"/>
        <end position="17"/>
    </location>
</feature>
<feature type="helix" evidence="2">
    <location>
        <begin position="19"/>
        <end position="26"/>
    </location>
</feature>
<feature type="strand" evidence="2">
    <location>
        <begin position="29"/>
        <end position="36"/>
    </location>
</feature>
<feature type="helix" evidence="2">
    <location>
        <begin position="37"/>
        <end position="40"/>
    </location>
</feature>
<feature type="helix" evidence="2">
    <location>
        <begin position="63"/>
        <end position="74"/>
    </location>
</feature>
<feature type="helix" evidence="2">
    <location>
        <begin position="116"/>
        <end position="118"/>
    </location>
</feature>
<feature type="strand" evidence="2">
    <location>
        <begin position="121"/>
        <end position="125"/>
    </location>
</feature>
<feature type="strand" evidence="2">
    <location>
        <begin position="129"/>
        <end position="131"/>
    </location>
</feature>
<feature type="helix" evidence="2">
    <location>
        <begin position="134"/>
        <end position="140"/>
    </location>
</feature>
<feature type="strand" evidence="2">
    <location>
        <begin position="144"/>
        <end position="149"/>
    </location>
</feature>
<feature type="helix" evidence="2">
    <location>
        <begin position="158"/>
        <end position="164"/>
    </location>
</feature>
<feature type="turn" evidence="2">
    <location>
        <begin position="165"/>
        <end position="167"/>
    </location>
</feature>
<feature type="strand" evidence="2">
    <location>
        <begin position="168"/>
        <end position="178"/>
    </location>
</feature>
<feature type="strand" evidence="2">
    <location>
        <begin position="181"/>
        <end position="183"/>
    </location>
</feature>
<feature type="helix" evidence="2">
    <location>
        <begin position="184"/>
        <end position="195"/>
    </location>
</feature>
<feature type="turn" evidence="2">
    <location>
        <begin position="204"/>
        <end position="206"/>
    </location>
</feature>
<feature type="turn" evidence="2">
    <location>
        <begin position="212"/>
        <end position="215"/>
    </location>
</feature>
<feature type="strand" evidence="2">
    <location>
        <begin position="227"/>
        <end position="229"/>
    </location>
</feature>
<feature type="helix" evidence="2">
    <location>
        <begin position="236"/>
        <end position="239"/>
    </location>
</feature>
<feature type="helix" evidence="2">
    <location>
        <begin position="243"/>
        <end position="261"/>
    </location>
</feature>
<feature type="helix" evidence="2">
    <location>
        <begin position="263"/>
        <end position="267"/>
    </location>
</feature>
<feature type="helix" evidence="2">
    <location>
        <begin position="273"/>
        <end position="283"/>
    </location>
</feature>
<organism>
    <name type="scientific">Corynebacterium diphtheriae (strain ATCC 700971 / NCTC 13129 / Biotype gravis)</name>
    <dbReference type="NCBI Taxonomy" id="257309"/>
    <lineage>
        <taxon>Bacteria</taxon>
        <taxon>Bacillati</taxon>
        <taxon>Actinomycetota</taxon>
        <taxon>Actinomycetes</taxon>
        <taxon>Mycobacteriales</taxon>
        <taxon>Corynebacteriaceae</taxon>
        <taxon>Corynebacterium</taxon>
    </lineage>
</organism>
<dbReference type="EC" id="2.1.1.228" evidence="1"/>
<dbReference type="EMBL" id="BX248358">
    <property type="protein sequence ID" value="CAE50056.1"/>
    <property type="molecule type" value="Genomic_DNA"/>
</dbReference>
<dbReference type="RefSeq" id="WP_010935129.1">
    <property type="nucleotide sequence ID" value="NC_002935.2"/>
</dbReference>
<dbReference type="PDB" id="7KFF">
    <property type="method" value="X-ray"/>
    <property type="resolution" value="1.35 A"/>
    <property type="chains" value="A=1-292"/>
</dbReference>
<dbReference type="PDBsum" id="7KFF"/>
<dbReference type="SMR" id="Q6NGI5"/>
<dbReference type="STRING" id="257309.DIP1530"/>
<dbReference type="KEGG" id="cdi:DIP1530"/>
<dbReference type="HOGENOM" id="CLU_047363_0_0_11"/>
<dbReference type="Proteomes" id="UP000002198">
    <property type="component" value="Chromosome"/>
</dbReference>
<dbReference type="GO" id="GO:0005829">
    <property type="term" value="C:cytosol"/>
    <property type="evidence" value="ECO:0007669"/>
    <property type="project" value="TreeGrafter"/>
</dbReference>
<dbReference type="GO" id="GO:0052906">
    <property type="term" value="F:tRNA (guanine(37)-N1)-methyltransferase activity"/>
    <property type="evidence" value="ECO:0007669"/>
    <property type="project" value="UniProtKB-UniRule"/>
</dbReference>
<dbReference type="GO" id="GO:0002939">
    <property type="term" value="P:tRNA N1-guanine methylation"/>
    <property type="evidence" value="ECO:0007669"/>
    <property type="project" value="TreeGrafter"/>
</dbReference>
<dbReference type="CDD" id="cd18080">
    <property type="entry name" value="TrmD-like"/>
    <property type="match status" value="1"/>
</dbReference>
<dbReference type="FunFam" id="1.10.1270.20:FF:000001">
    <property type="entry name" value="tRNA (guanine-N(1)-)-methyltransferase"/>
    <property type="match status" value="1"/>
</dbReference>
<dbReference type="Gene3D" id="3.40.1280.10">
    <property type="match status" value="2"/>
</dbReference>
<dbReference type="Gene3D" id="1.10.1270.20">
    <property type="entry name" value="tRNA(m1g37)methyltransferase, domain 2"/>
    <property type="match status" value="1"/>
</dbReference>
<dbReference type="HAMAP" id="MF_00605">
    <property type="entry name" value="TrmD"/>
    <property type="match status" value="1"/>
</dbReference>
<dbReference type="InterPro" id="IPR029028">
    <property type="entry name" value="Alpha/beta_knot_MTases"/>
</dbReference>
<dbReference type="InterPro" id="IPR023148">
    <property type="entry name" value="tRNA_m1G_MeTrfase_C_sf"/>
</dbReference>
<dbReference type="InterPro" id="IPR002649">
    <property type="entry name" value="tRNA_m1G_MeTrfase_TrmD"/>
</dbReference>
<dbReference type="InterPro" id="IPR029026">
    <property type="entry name" value="tRNA_m1G_MTases_N"/>
</dbReference>
<dbReference type="InterPro" id="IPR016009">
    <property type="entry name" value="tRNA_MeTrfase_TRMD/TRM10"/>
</dbReference>
<dbReference type="NCBIfam" id="NF000648">
    <property type="entry name" value="PRK00026.1"/>
    <property type="match status" value="1"/>
</dbReference>
<dbReference type="PANTHER" id="PTHR46417">
    <property type="entry name" value="TRNA (GUANINE-N(1)-)-METHYLTRANSFERASE"/>
    <property type="match status" value="1"/>
</dbReference>
<dbReference type="PANTHER" id="PTHR46417:SF1">
    <property type="entry name" value="TRNA (GUANINE-N(1)-)-METHYLTRANSFERASE"/>
    <property type="match status" value="1"/>
</dbReference>
<dbReference type="Pfam" id="PF01746">
    <property type="entry name" value="tRNA_m1G_MT"/>
    <property type="match status" value="2"/>
</dbReference>
<dbReference type="PIRSF" id="PIRSF000386">
    <property type="entry name" value="tRNA_mtase"/>
    <property type="match status" value="1"/>
</dbReference>
<dbReference type="SUPFAM" id="SSF75217">
    <property type="entry name" value="alpha/beta knot"/>
    <property type="match status" value="1"/>
</dbReference>
<reference key="1">
    <citation type="journal article" date="2003" name="Nucleic Acids Res.">
        <title>The complete genome sequence and analysis of Corynebacterium diphtheriae NCTC13129.</title>
        <authorList>
            <person name="Cerdeno-Tarraga A.-M."/>
            <person name="Efstratiou A."/>
            <person name="Dover L.G."/>
            <person name="Holden M.T.G."/>
            <person name="Pallen M.J."/>
            <person name="Bentley S.D."/>
            <person name="Besra G.S."/>
            <person name="Churcher C.M."/>
            <person name="James K.D."/>
            <person name="De Zoysa A."/>
            <person name="Chillingworth T."/>
            <person name="Cronin A."/>
            <person name="Dowd L."/>
            <person name="Feltwell T."/>
            <person name="Hamlin N."/>
            <person name="Holroyd S."/>
            <person name="Jagels K."/>
            <person name="Moule S."/>
            <person name="Quail M.A."/>
            <person name="Rabbinowitsch E."/>
            <person name="Rutherford K.M."/>
            <person name="Thomson N.R."/>
            <person name="Unwin L."/>
            <person name="Whitehead S."/>
            <person name="Barrell B.G."/>
            <person name="Parkhill J."/>
        </authorList>
    </citation>
    <scope>NUCLEOTIDE SEQUENCE [LARGE SCALE GENOMIC DNA]</scope>
    <source>
        <strain>ATCC 700971 / NCTC 13129 / Biotype gravis</strain>
    </source>
</reference>
<name>TRMD_CORDI</name>
<keyword id="KW-0002">3D-structure</keyword>
<keyword id="KW-0963">Cytoplasm</keyword>
<keyword id="KW-0489">Methyltransferase</keyword>
<keyword id="KW-1185">Reference proteome</keyword>
<keyword id="KW-0949">S-adenosyl-L-methionine</keyword>
<keyword id="KW-0808">Transferase</keyword>
<keyword id="KW-0819">tRNA processing</keyword>
<evidence type="ECO:0000255" key="1">
    <source>
        <dbReference type="HAMAP-Rule" id="MF_00605"/>
    </source>
</evidence>
<evidence type="ECO:0007829" key="2">
    <source>
        <dbReference type="PDB" id="7KFF"/>
    </source>
</evidence>
<proteinExistence type="evidence at protein level"/>
<comment type="function">
    <text evidence="1">Specifically methylates guanosine-37 in various tRNAs.</text>
</comment>
<comment type="catalytic activity">
    <reaction evidence="1">
        <text>guanosine(37) in tRNA + S-adenosyl-L-methionine = N(1)-methylguanosine(37) in tRNA + S-adenosyl-L-homocysteine + H(+)</text>
        <dbReference type="Rhea" id="RHEA:36899"/>
        <dbReference type="Rhea" id="RHEA-COMP:10145"/>
        <dbReference type="Rhea" id="RHEA-COMP:10147"/>
        <dbReference type="ChEBI" id="CHEBI:15378"/>
        <dbReference type="ChEBI" id="CHEBI:57856"/>
        <dbReference type="ChEBI" id="CHEBI:59789"/>
        <dbReference type="ChEBI" id="CHEBI:73542"/>
        <dbReference type="ChEBI" id="CHEBI:74269"/>
        <dbReference type="EC" id="2.1.1.228"/>
    </reaction>
</comment>
<comment type="subunit">
    <text evidence="1">Homodimer.</text>
</comment>
<comment type="subcellular location">
    <subcellularLocation>
        <location evidence="1">Cytoplasm</location>
    </subcellularLocation>
</comment>
<comment type="similarity">
    <text evidence="1">Belongs to the RNA methyltransferase TrmD family.</text>
</comment>
<sequence>MRLDVITIFPEYLDPLRHALLGKAIEKDLLSVGVHDLRLWAEDAHKSVDDSPFGGGPGMVMKPTVWGPALDDVATMSGKAHMGAQLDSARVHVDKPRHDELEGIQFAGYDAAEVAEADKPLLLVPTPAGAPFTQEDARAWSNEEHIVFACGRYEGIDQRVIEDAKKTYRVREVSIGDYVLIGGEVAVLVIAEAVVRLIPGVLGNTQSHQDDSFSDGLLEGPSYTKPREWRGLEVPEVLTSGNHAKIERWRREQSLKRTWEVRPELLDGMELDRHDQAYVEGLRRGNTSDNLN</sequence>
<protein>
    <recommendedName>
        <fullName evidence="1">tRNA (guanine-N(1)-)-methyltransferase</fullName>
        <ecNumber evidence="1">2.1.1.228</ecNumber>
    </recommendedName>
    <alternativeName>
        <fullName evidence="1">M1G-methyltransferase</fullName>
    </alternativeName>
    <alternativeName>
        <fullName evidence="1">tRNA [GM37] methyltransferase</fullName>
    </alternativeName>
</protein>